<organism>
    <name type="scientific">Xylella fastidiosa (strain 9a5c)</name>
    <dbReference type="NCBI Taxonomy" id="160492"/>
    <lineage>
        <taxon>Bacteria</taxon>
        <taxon>Pseudomonadati</taxon>
        <taxon>Pseudomonadota</taxon>
        <taxon>Gammaproteobacteria</taxon>
        <taxon>Lysobacterales</taxon>
        <taxon>Lysobacteraceae</taxon>
        <taxon>Xylella</taxon>
    </lineage>
</organism>
<dbReference type="EC" id="2.4.1.-" evidence="1"/>
<dbReference type="EMBL" id="AE003849">
    <property type="protein sequence ID" value="AAF84432.1"/>
    <property type="status" value="ALT_INIT"/>
    <property type="molecule type" value="Genomic_DNA"/>
</dbReference>
<dbReference type="PIR" id="G82658">
    <property type="entry name" value="G82658"/>
</dbReference>
<dbReference type="STRING" id="160492.XF_1623"/>
<dbReference type="CAZy" id="GT2">
    <property type="family name" value="Glycosyltransferase Family 2"/>
</dbReference>
<dbReference type="KEGG" id="xfa:XF_1623"/>
<dbReference type="eggNOG" id="COG2943">
    <property type="taxonomic scope" value="Bacteria"/>
</dbReference>
<dbReference type="HOGENOM" id="CLU_015730_1_0_6"/>
<dbReference type="UniPathway" id="UPA00637"/>
<dbReference type="Proteomes" id="UP000000812">
    <property type="component" value="Chromosome"/>
</dbReference>
<dbReference type="GO" id="GO:0005886">
    <property type="term" value="C:plasma membrane"/>
    <property type="evidence" value="ECO:0007669"/>
    <property type="project" value="UniProtKB-SubCell"/>
</dbReference>
<dbReference type="GO" id="GO:0016758">
    <property type="term" value="F:hexosyltransferase activity"/>
    <property type="evidence" value="ECO:0007669"/>
    <property type="project" value="UniProtKB-UniRule"/>
</dbReference>
<dbReference type="GO" id="GO:0009250">
    <property type="term" value="P:glucan biosynthetic process"/>
    <property type="evidence" value="ECO:0007669"/>
    <property type="project" value="UniProtKB-UniRule"/>
</dbReference>
<dbReference type="CDD" id="cd04191">
    <property type="entry name" value="Glucan_BSP_MdoH"/>
    <property type="match status" value="1"/>
</dbReference>
<dbReference type="Gene3D" id="3.90.550.10">
    <property type="entry name" value="Spore Coat Polysaccharide Biosynthesis Protein SpsA, Chain A"/>
    <property type="match status" value="1"/>
</dbReference>
<dbReference type="HAMAP" id="MF_01072">
    <property type="entry name" value="MdoH_OpgH"/>
    <property type="match status" value="1"/>
</dbReference>
<dbReference type="InterPro" id="IPR023725">
    <property type="entry name" value="Glucans_biosynth_gluTrFase_H"/>
</dbReference>
<dbReference type="InterPro" id="IPR001173">
    <property type="entry name" value="Glyco_trans_2-like"/>
</dbReference>
<dbReference type="InterPro" id="IPR050321">
    <property type="entry name" value="Glycosyltr_2/OpgH_subfam"/>
</dbReference>
<dbReference type="InterPro" id="IPR029044">
    <property type="entry name" value="Nucleotide-diphossugar_trans"/>
</dbReference>
<dbReference type="NCBIfam" id="NF003957">
    <property type="entry name" value="PRK05454.1-4"/>
    <property type="match status" value="1"/>
</dbReference>
<dbReference type="NCBIfam" id="NF003958">
    <property type="entry name" value="PRK05454.2-1"/>
    <property type="match status" value="1"/>
</dbReference>
<dbReference type="NCBIfam" id="NF003962">
    <property type="entry name" value="PRK05454.2-5"/>
    <property type="match status" value="1"/>
</dbReference>
<dbReference type="PANTHER" id="PTHR43867">
    <property type="entry name" value="CELLULOSE SYNTHASE CATALYTIC SUBUNIT A [UDP-FORMING]"/>
    <property type="match status" value="1"/>
</dbReference>
<dbReference type="PANTHER" id="PTHR43867:SF5">
    <property type="entry name" value="GLUCANS BIOSYNTHESIS GLUCOSYLTRANSFERASE H"/>
    <property type="match status" value="1"/>
</dbReference>
<dbReference type="Pfam" id="PF13632">
    <property type="entry name" value="Glyco_trans_2_3"/>
    <property type="match status" value="1"/>
</dbReference>
<dbReference type="SUPFAM" id="SSF53448">
    <property type="entry name" value="Nucleotide-diphospho-sugar transferases"/>
    <property type="match status" value="1"/>
</dbReference>
<gene>
    <name evidence="1" type="primary">opgH</name>
    <name type="ordered locus">XF_1623</name>
</gene>
<reference key="1">
    <citation type="journal article" date="2000" name="Nature">
        <title>The genome sequence of the plant pathogen Xylella fastidiosa.</title>
        <authorList>
            <person name="Simpson A.J.G."/>
            <person name="Reinach F.C."/>
            <person name="Arruda P."/>
            <person name="Abreu F.A."/>
            <person name="Acencio M."/>
            <person name="Alvarenga R."/>
            <person name="Alves L.M.C."/>
            <person name="Araya J.E."/>
            <person name="Baia G.S."/>
            <person name="Baptista C.S."/>
            <person name="Barros M.H."/>
            <person name="Bonaccorsi E.D."/>
            <person name="Bordin S."/>
            <person name="Bove J.M."/>
            <person name="Briones M.R.S."/>
            <person name="Bueno M.R.P."/>
            <person name="Camargo A.A."/>
            <person name="Camargo L.E.A."/>
            <person name="Carraro D.M."/>
            <person name="Carrer H."/>
            <person name="Colauto N.B."/>
            <person name="Colombo C."/>
            <person name="Costa F.F."/>
            <person name="Costa M.C.R."/>
            <person name="Costa-Neto C.M."/>
            <person name="Coutinho L.L."/>
            <person name="Cristofani M."/>
            <person name="Dias-Neto E."/>
            <person name="Docena C."/>
            <person name="El-Dorry H."/>
            <person name="Facincani A.P."/>
            <person name="Ferreira A.J.S."/>
            <person name="Ferreira V.C.A."/>
            <person name="Ferro J.A."/>
            <person name="Fraga J.S."/>
            <person name="Franca S.C."/>
            <person name="Franco M.C."/>
            <person name="Frohme M."/>
            <person name="Furlan L.R."/>
            <person name="Garnier M."/>
            <person name="Goldman G.H."/>
            <person name="Goldman M.H.S."/>
            <person name="Gomes S.L."/>
            <person name="Gruber A."/>
            <person name="Ho P.L."/>
            <person name="Hoheisel J.D."/>
            <person name="Junqueira M.L."/>
            <person name="Kemper E.L."/>
            <person name="Kitajima J.P."/>
            <person name="Krieger J.E."/>
            <person name="Kuramae E.E."/>
            <person name="Laigret F."/>
            <person name="Lambais M.R."/>
            <person name="Leite L.C.C."/>
            <person name="Lemos E.G.M."/>
            <person name="Lemos M.V.F."/>
            <person name="Lopes S.A."/>
            <person name="Lopes C.R."/>
            <person name="Machado J.A."/>
            <person name="Machado M.A."/>
            <person name="Madeira A.M.B.N."/>
            <person name="Madeira H.M.F."/>
            <person name="Marino C.L."/>
            <person name="Marques M.V."/>
            <person name="Martins E.A.L."/>
            <person name="Martins E.M.F."/>
            <person name="Matsukuma A.Y."/>
            <person name="Menck C.F.M."/>
            <person name="Miracca E.C."/>
            <person name="Miyaki C.Y."/>
            <person name="Monteiro-Vitorello C.B."/>
            <person name="Moon D.H."/>
            <person name="Nagai M.A."/>
            <person name="Nascimento A.L.T.O."/>
            <person name="Netto L.E.S."/>
            <person name="Nhani A. Jr."/>
            <person name="Nobrega F.G."/>
            <person name="Nunes L.R."/>
            <person name="Oliveira M.A."/>
            <person name="de Oliveira M.C."/>
            <person name="de Oliveira R.C."/>
            <person name="Palmieri D.A."/>
            <person name="Paris A."/>
            <person name="Peixoto B.R."/>
            <person name="Pereira G.A.G."/>
            <person name="Pereira H.A. Jr."/>
            <person name="Pesquero J.B."/>
            <person name="Quaggio R.B."/>
            <person name="Roberto P.G."/>
            <person name="Rodrigues V."/>
            <person name="de Rosa A.J.M."/>
            <person name="de Rosa V.E. Jr."/>
            <person name="de Sa R.G."/>
            <person name="Santelli R.V."/>
            <person name="Sawasaki H.E."/>
            <person name="da Silva A.C.R."/>
            <person name="da Silva A.M."/>
            <person name="da Silva F.R."/>
            <person name="Silva W.A. Jr."/>
            <person name="da Silveira J.F."/>
            <person name="Silvestri M.L.Z."/>
            <person name="Siqueira W.J."/>
            <person name="de Souza A.A."/>
            <person name="de Souza A.P."/>
            <person name="Terenzi M.F."/>
            <person name="Truffi D."/>
            <person name="Tsai S.M."/>
            <person name="Tsuhako M.H."/>
            <person name="Vallada H."/>
            <person name="Van Sluys M.A."/>
            <person name="Verjovski-Almeida S."/>
            <person name="Vettore A.L."/>
            <person name="Zago M.A."/>
            <person name="Zatz M."/>
            <person name="Meidanis J."/>
            <person name="Setubal J.C."/>
        </authorList>
    </citation>
    <scope>NUCLEOTIDE SEQUENCE [LARGE SCALE GENOMIC DNA]</scope>
    <source>
        <strain>9a5c</strain>
    </source>
</reference>
<protein>
    <recommendedName>
        <fullName evidence="1">Glucans biosynthesis glucosyltransferase H</fullName>
        <ecNumber evidence="1">2.4.1.-</ecNumber>
    </recommendedName>
</protein>
<evidence type="ECO:0000255" key="1">
    <source>
        <dbReference type="HAMAP-Rule" id="MF_01072"/>
    </source>
</evidence>
<evidence type="ECO:0000305" key="2"/>
<name>OPGH_XYLFA</name>
<proteinExistence type="inferred from homology"/>
<accession>Q9PCY1</accession>
<sequence length="638" mass="70312">MQALMEMQIGASEVVQVLDTGCAVLPPESPLPMPEQSLRKGRLQVPRQRTAPLGIGLRRFYLIGGTMAMSLIATWVMLAVMWPGGINVLEGCLLVLFMFLFAWVTMSFASALAGFFCVVFGGGRKLGIDPQVPLPDLHTYTALLVPTYHEDPCRLLAGLQAIYESLAETGQLEHFDFFVLSDSRREEFGLAEEREYAALCERLGAHDRIFYRRRADNAGRKAGNIADWVRRFGGAYQQMLILDADSVMTGDTIVRLVAAMESNPDVGLIQSLPVVVGGRTLFARMQQFGACVYGPIIAYGVAWWHGAESNYWGHNAVIRTKAFADHAGLPALPGRKPFGGHVLSHDFVEAALIRRGGWATHMVPYLQGSYEEGPPTLTDLLIRDRRWCQGNLQHAKIVTAAGLHWISRMHMLIGIGHYFTAPMWGLLMLVGIAIPLVGDGIDLTAGMHFSPAHYWHGRTDGDVLWIFTFTMFVLLAPKLLAYFALLFKPYERRACGGALRVLLSILLESILAALMAPVVMYLQSRGVFEVLAGKDSGWDAQQRDDGKLSWSVLLRSYGGLSVLGVLIGALAYTVSPPLAMWMSPVVLGMAFSVPVVALTSHRLVGAVLRRWGIFLIPEETAPSKVLIRVAELRRARQP</sequence>
<keyword id="KW-0997">Cell inner membrane</keyword>
<keyword id="KW-1003">Cell membrane</keyword>
<keyword id="KW-0328">Glycosyltransferase</keyword>
<keyword id="KW-0472">Membrane</keyword>
<keyword id="KW-0808">Transferase</keyword>
<keyword id="KW-0812">Transmembrane</keyword>
<keyword id="KW-1133">Transmembrane helix</keyword>
<comment type="function">
    <text evidence="1">Involved in the biosynthesis of osmoregulated periplasmic glucans (OPGs).</text>
</comment>
<comment type="pathway">
    <text evidence="1">Glycan metabolism; osmoregulated periplasmic glucan (OPG) biosynthesis.</text>
</comment>
<comment type="subcellular location">
    <subcellularLocation>
        <location evidence="1">Cell inner membrane</location>
        <topology evidence="1">Multi-pass membrane protein</topology>
    </subcellularLocation>
</comment>
<comment type="similarity">
    <text evidence="1">Belongs to the glycosyltransferase 2 family. OpgH subfamily.</text>
</comment>
<comment type="sequence caution" evidence="2">
    <conflict type="erroneous initiation">
        <sequence resource="EMBL-CDS" id="AAF84432"/>
    </conflict>
</comment>
<feature type="chain" id="PRO_0000210370" description="Glucans biosynthesis glucosyltransferase H">
    <location>
        <begin position="1"/>
        <end position="638"/>
    </location>
</feature>
<feature type="transmembrane region" description="Helical" evidence="1">
    <location>
        <begin position="60"/>
        <end position="82"/>
    </location>
</feature>
<feature type="transmembrane region" description="Helical" evidence="1">
    <location>
        <begin position="97"/>
        <end position="119"/>
    </location>
</feature>
<feature type="transmembrane region" description="Helical" evidence="1">
    <location>
        <begin position="415"/>
        <end position="437"/>
    </location>
</feature>
<feature type="transmembrane region" description="Helical" evidence="1">
    <location>
        <begin position="464"/>
        <end position="486"/>
    </location>
</feature>
<feature type="transmembrane region" description="Helical" evidence="1">
    <location>
        <begin position="499"/>
        <end position="521"/>
    </location>
</feature>
<feature type="transmembrane region" description="Helical" evidence="1">
    <location>
        <begin position="578"/>
        <end position="600"/>
    </location>
</feature>